<feature type="chain" id="PRO_0000440686" description="Vacuolar protein sorting-associated protein 60.2">
    <location>
        <begin position="1"/>
        <end position="235"/>
    </location>
</feature>
<feature type="region of interest" description="Disordered" evidence="3">
    <location>
        <begin position="1"/>
        <end position="30"/>
    </location>
</feature>
<feature type="region of interest" description="Disordered" evidence="3">
    <location>
        <begin position="174"/>
        <end position="235"/>
    </location>
</feature>
<feature type="coiled-coil region" evidence="2">
    <location>
        <begin position="99"/>
        <end position="148"/>
    </location>
</feature>
<feature type="compositionally biased region" description="Basic and acidic residues" evidence="3">
    <location>
        <begin position="20"/>
        <end position="30"/>
    </location>
</feature>
<feature type="sequence conflict" description="In Ref. 4; AAM66939." evidence="5" ref="4">
    <original>A</original>
    <variation>T</variation>
    <location>
        <position position="63"/>
    </location>
</feature>
<feature type="sequence conflict" description="In Ref. 4; AAM66939." evidence="5" ref="4">
    <original>E</original>
    <variation>K</variation>
    <location>
        <position position="172"/>
    </location>
</feature>
<protein>
    <recommendedName>
        <fullName evidence="5">Vacuolar protein sorting-associated protein 60.2</fullName>
    </recommendedName>
</protein>
<proteinExistence type="evidence at transcript level"/>
<sequence>MKRIFGAKNNKEPPPSIQDASDRINKRGDSVEEKVKRLDAELCKYKDQIKRTRPGPALEAIKARAMRVLKQKKMYEGQRDMLYNQTFNLDQVSFAAEGLKDAQQTMTALKSANKELKGMMKTVKIQDIDNLQDDMMDLMDESSEIQETLGRSYNVPDDIDEDDLLGELDALEADMGNETEADGVPSYLQPDKEPDLNDELNLPSAPMGHTGAPPGRAQAEDEWGLPAVPRASLRG</sequence>
<organism>
    <name type="scientific">Arabidopsis thaliana</name>
    <name type="common">Mouse-ear cress</name>
    <dbReference type="NCBI Taxonomy" id="3702"/>
    <lineage>
        <taxon>Eukaryota</taxon>
        <taxon>Viridiplantae</taxon>
        <taxon>Streptophyta</taxon>
        <taxon>Embryophyta</taxon>
        <taxon>Tracheophyta</taxon>
        <taxon>Spermatophyta</taxon>
        <taxon>Magnoliopsida</taxon>
        <taxon>eudicotyledons</taxon>
        <taxon>Gunneridae</taxon>
        <taxon>Pentapetalae</taxon>
        <taxon>rosids</taxon>
        <taxon>malvids</taxon>
        <taxon>Brassicales</taxon>
        <taxon>Brassicaceae</taxon>
        <taxon>Camelineae</taxon>
        <taxon>Arabidopsis</taxon>
    </lineage>
</organism>
<keyword id="KW-0025">Alternative splicing</keyword>
<keyword id="KW-0175">Coiled coil</keyword>
<keyword id="KW-0967">Endosome</keyword>
<keyword id="KW-0472">Membrane</keyword>
<keyword id="KW-0653">Protein transport</keyword>
<keyword id="KW-1185">Reference proteome</keyword>
<keyword id="KW-0813">Transport</keyword>
<comment type="function">
    <text evidence="6">Probable peripherally associated component of the endosomal sorting required for transport complex III (ESCRT-III) which is involved in multivesicular bodies (MVBs) formation and sorting of endosomal cargo proteins into MVBs.</text>
</comment>
<comment type="subcellular location">
    <subcellularLocation>
        <location evidence="1">Endosome</location>
        <location evidence="1">Multivesicular body membrane</location>
        <topology evidence="1">Peripheral membrane protein</topology>
    </subcellularLocation>
</comment>
<comment type="alternative products">
    <event type="alternative splicing"/>
    <isoform>
        <id>Q9FMC5-1</id>
        <name>1</name>
        <sequence type="displayed"/>
    </isoform>
    <text evidence="5">Additional isoforms seem to exist.</text>
</comment>
<comment type="similarity">
    <text evidence="5">Belongs to the SNF7 family.</text>
</comment>
<evidence type="ECO:0000250" key="1">
    <source>
        <dbReference type="UniProtKB" id="Q9LPN5"/>
    </source>
</evidence>
<evidence type="ECO:0000255" key="2"/>
<evidence type="ECO:0000256" key="3">
    <source>
        <dbReference type="SAM" id="MobiDB-lite"/>
    </source>
</evidence>
<evidence type="ECO:0000303" key="4">
    <source>
    </source>
</evidence>
<evidence type="ECO:0000305" key="5"/>
<evidence type="ECO:0000305" key="6">
    <source>
    </source>
</evidence>
<evidence type="ECO:0000312" key="7">
    <source>
        <dbReference type="Araport" id="AT5G04850"/>
    </source>
</evidence>
<evidence type="ECO:0000312" key="8">
    <source>
        <dbReference type="EMBL" id="BAB08989.1"/>
    </source>
</evidence>
<gene>
    <name evidence="5" type="primary">VPS60-2</name>
    <name evidence="4" type="synonym">VPS60B</name>
    <name evidence="7" type="ordered locus">At5g04850</name>
    <name evidence="8" type="ORF">MUK11_17</name>
</gene>
<dbReference type="EMBL" id="AB008271">
    <property type="protein sequence ID" value="BAB08989.1"/>
    <property type="molecule type" value="Genomic_DNA"/>
</dbReference>
<dbReference type="EMBL" id="CP002688">
    <property type="protein sequence ID" value="AED90794.1"/>
    <property type="molecule type" value="Genomic_DNA"/>
</dbReference>
<dbReference type="EMBL" id="AF370241">
    <property type="protein sequence ID" value="AAK44056.1"/>
    <property type="molecule type" value="mRNA"/>
</dbReference>
<dbReference type="EMBL" id="AY142614">
    <property type="protein sequence ID" value="AAN13183.1"/>
    <property type="molecule type" value="mRNA"/>
</dbReference>
<dbReference type="EMBL" id="AY088616">
    <property type="protein sequence ID" value="AAM66939.1"/>
    <property type="molecule type" value="mRNA"/>
</dbReference>
<dbReference type="RefSeq" id="NP_568143.1">
    <molecule id="Q9FMC5-1"/>
    <property type="nucleotide sequence ID" value="NM_120567.3"/>
</dbReference>
<dbReference type="SMR" id="Q9FMC5"/>
<dbReference type="FunCoup" id="Q9FMC5">
    <property type="interactions" value="4926"/>
</dbReference>
<dbReference type="STRING" id="3702.Q9FMC5"/>
<dbReference type="EnsemblPlants" id="AT5G04850.1">
    <molecule id="Q9FMC5-1"/>
    <property type="protein sequence ID" value="AT5G04850.1"/>
    <property type="gene ID" value="AT5G04850"/>
</dbReference>
<dbReference type="GeneID" id="830364"/>
<dbReference type="Gramene" id="AT5G04850.1">
    <molecule id="Q9FMC5-1"/>
    <property type="protein sequence ID" value="AT5G04850.1"/>
    <property type="gene ID" value="AT5G04850"/>
</dbReference>
<dbReference type="KEGG" id="ath:AT5G04850"/>
<dbReference type="Araport" id="AT5G04850"/>
<dbReference type="TAIR" id="AT5G04850">
    <property type="gene designation" value="VPS60.2"/>
</dbReference>
<dbReference type="HOGENOM" id="CLU_079409_0_0_1"/>
<dbReference type="InParanoid" id="Q9FMC5"/>
<dbReference type="OMA" id="APMGHAS"/>
<dbReference type="OrthoDB" id="3973241at2759"/>
<dbReference type="PhylomeDB" id="Q9FMC5"/>
<dbReference type="PRO" id="PR:Q9FMC5"/>
<dbReference type="Proteomes" id="UP000006548">
    <property type="component" value="Chromosome 5"/>
</dbReference>
<dbReference type="ExpressionAtlas" id="Q9FMC5">
    <property type="expression patterns" value="baseline and differential"/>
</dbReference>
<dbReference type="GO" id="GO:0032585">
    <property type="term" value="C:multivesicular body membrane"/>
    <property type="evidence" value="ECO:0007669"/>
    <property type="project" value="UniProtKB-SubCell"/>
</dbReference>
<dbReference type="GO" id="GO:0015031">
    <property type="term" value="P:protein transport"/>
    <property type="evidence" value="ECO:0007669"/>
    <property type="project" value="UniProtKB-KW"/>
</dbReference>
<dbReference type="GO" id="GO:0007034">
    <property type="term" value="P:vacuolar transport"/>
    <property type="evidence" value="ECO:0007669"/>
    <property type="project" value="InterPro"/>
</dbReference>
<dbReference type="Gene3D" id="6.10.250.1710">
    <property type="match status" value="1"/>
</dbReference>
<dbReference type="InterPro" id="IPR005024">
    <property type="entry name" value="Snf7_fam"/>
</dbReference>
<dbReference type="PANTHER" id="PTHR22761">
    <property type="entry name" value="CHARGED MULTIVESICULAR BODY PROTEIN"/>
    <property type="match status" value="1"/>
</dbReference>
<dbReference type="PANTHER" id="PTHR22761:SF81">
    <property type="entry name" value="VACUOLAR PROTEIN SORTING-ASSOCIATED PROTEIN 60.2"/>
    <property type="match status" value="1"/>
</dbReference>
<dbReference type="Pfam" id="PF03357">
    <property type="entry name" value="Snf7"/>
    <property type="match status" value="1"/>
</dbReference>
<accession>Q9FMC5</accession>
<accession>Q8L964</accession>
<reference key="1">
    <citation type="journal article" date="1997" name="DNA Res.">
        <title>Structural analysis of Arabidopsis thaliana chromosome 5. III. Sequence features of the regions of 1,191,918 bp covered by seventeen physically assigned P1 clones.</title>
        <authorList>
            <person name="Nakamura Y."/>
            <person name="Sato S."/>
            <person name="Kaneko T."/>
            <person name="Kotani H."/>
            <person name="Asamizu E."/>
            <person name="Miyajima N."/>
            <person name="Tabata S."/>
        </authorList>
    </citation>
    <scope>NUCLEOTIDE SEQUENCE [LARGE SCALE GENOMIC DNA]</scope>
    <source>
        <strain>cv. Columbia</strain>
    </source>
</reference>
<reference key="2">
    <citation type="journal article" date="2017" name="Plant J.">
        <title>Araport11: a complete reannotation of the Arabidopsis thaliana reference genome.</title>
        <authorList>
            <person name="Cheng C.Y."/>
            <person name="Krishnakumar V."/>
            <person name="Chan A.P."/>
            <person name="Thibaud-Nissen F."/>
            <person name="Schobel S."/>
            <person name="Town C.D."/>
        </authorList>
    </citation>
    <scope>GENOME REANNOTATION</scope>
    <source>
        <strain>cv. Columbia</strain>
    </source>
</reference>
<reference key="3">
    <citation type="journal article" date="2003" name="Science">
        <title>Empirical analysis of transcriptional activity in the Arabidopsis genome.</title>
        <authorList>
            <person name="Yamada K."/>
            <person name="Lim J."/>
            <person name="Dale J.M."/>
            <person name="Chen H."/>
            <person name="Shinn P."/>
            <person name="Palm C.J."/>
            <person name="Southwick A.M."/>
            <person name="Wu H.C."/>
            <person name="Kim C.J."/>
            <person name="Nguyen M."/>
            <person name="Pham P.K."/>
            <person name="Cheuk R.F."/>
            <person name="Karlin-Newmann G."/>
            <person name="Liu S.X."/>
            <person name="Lam B."/>
            <person name="Sakano H."/>
            <person name="Wu T."/>
            <person name="Yu G."/>
            <person name="Miranda M."/>
            <person name="Quach H.L."/>
            <person name="Tripp M."/>
            <person name="Chang C.H."/>
            <person name="Lee J.M."/>
            <person name="Toriumi M.J."/>
            <person name="Chan M.M."/>
            <person name="Tang C.C."/>
            <person name="Onodera C.S."/>
            <person name="Deng J.M."/>
            <person name="Akiyama K."/>
            <person name="Ansari Y."/>
            <person name="Arakawa T."/>
            <person name="Banh J."/>
            <person name="Banno F."/>
            <person name="Bowser L."/>
            <person name="Brooks S.Y."/>
            <person name="Carninci P."/>
            <person name="Chao Q."/>
            <person name="Choy N."/>
            <person name="Enju A."/>
            <person name="Goldsmith A.D."/>
            <person name="Gurjal M."/>
            <person name="Hansen N.F."/>
            <person name="Hayashizaki Y."/>
            <person name="Johnson-Hopson C."/>
            <person name="Hsuan V.W."/>
            <person name="Iida K."/>
            <person name="Karnes M."/>
            <person name="Khan S."/>
            <person name="Koesema E."/>
            <person name="Ishida J."/>
            <person name="Jiang P.X."/>
            <person name="Jones T."/>
            <person name="Kawai J."/>
            <person name="Kamiya A."/>
            <person name="Meyers C."/>
            <person name="Nakajima M."/>
            <person name="Narusaka M."/>
            <person name="Seki M."/>
            <person name="Sakurai T."/>
            <person name="Satou M."/>
            <person name="Tamse R."/>
            <person name="Vaysberg M."/>
            <person name="Wallender E.K."/>
            <person name="Wong C."/>
            <person name="Yamamura Y."/>
            <person name="Yuan S."/>
            <person name="Shinozaki K."/>
            <person name="Davis R.W."/>
            <person name="Theologis A."/>
            <person name="Ecker J.R."/>
        </authorList>
    </citation>
    <scope>NUCLEOTIDE SEQUENCE [LARGE SCALE MRNA]</scope>
    <source>
        <strain>cv. Columbia</strain>
    </source>
</reference>
<reference key="4">
    <citation type="submission" date="2002-03" db="EMBL/GenBank/DDBJ databases">
        <title>Full-length cDNA from Arabidopsis thaliana.</title>
        <authorList>
            <person name="Brover V.V."/>
            <person name="Troukhan M.E."/>
            <person name="Alexandrov N.A."/>
            <person name="Lu Y.-P."/>
            <person name="Flavell R.B."/>
            <person name="Feldmann K.A."/>
        </authorList>
    </citation>
    <scope>NUCLEOTIDE SEQUENCE [LARGE SCALE MRNA]</scope>
</reference>
<reference key="5">
    <citation type="journal article" date="2006" name="Trends Plant Sci.">
        <title>Exploring the ESCRTing machinery in eukaryotes.</title>
        <authorList>
            <person name="Winter V."/>
            <person name="Hauser M.-T."/>
        </authorList>
    </citation>
    <scope>IDENTIFICATION</scope>
    <scope>REVIEW</scope>
</reference>
<reference key="6">
    <citation type="journal article" date="2011" name="Front. Plant Sci.">
        <title>Protein-protein interaction network and subcellular localization of the Arabidopsis thaliana ESCRT machinery.</title>
        <authorList>
            <person name="Richardson L.G."/>
            <person name="Howard A.S."/>
            <person name="Khuu N."/>
            <person name="Gidda S.K."/>
            <person name="McCartney A."/>
            <person name="Morphy B.J."/>
            <person name="Mullen R.T."/>
        </authorList>
    </citation>
    <scope>GENE FAMILY</scope>
    <scope>NOMENCLATURE</scope>
</reference>
<name>VP602_ARATH</name>